<gene>
    <name type="primary">ZNF408</name>
    <name type="synonym">PFM14</name>
    <name type="synonym">PRDM17</name>
</gene>
<name>ZN408_HUMAN</name>
<feature type="chain" id="PRO_0000047569" description="Zinc finger protein 408">
    <location>
        <begin position="1"/>
        <end position="720"/>
    </location>
</feature>
<feature type="zinc finger region" description="C2H2-type 1" evidence="1">
    <location>
        <begin position="353"/>
        <end position="375"/>
    </location>
</feature>
<feature type="zinc finger region" description="C2H2-type 2" evidence="1">
    <location>
        <begin position="381"/>
        <end position="403"/>
    </location>
</feature>
<feature type="zinc finger region" description="C2H2-type 3" evidence="1">
    <location>
        <begin position="409"/>
        <end position="431"/>
    </location>
</feature>
<feature type="zinc finger region" description="C2H2-type 4" evidence="1">
    <location>
        <begin position="437"/>
        <end position="459"/>
    </location>
</feature>
<feature type="zinc finger region" description="C2H2-type 5" evidence="1">
    <location>
        <begin position="468"/>
        <end position="490"/>
    </location>
</feature>
<feature type="zinc finger region" description="C2H2-type 6" evidence="1">
    <location>
        <begin position="496"/>
        <end position="518"/>
    </location>
</feature>
<feature type="zinc finger region" description="C2H2-type 7" evidence="1">
    <location>
        <begin position="524"/>
        <end position="546"/>
    </location>
</feature>
<feature type="zinc finger region" description="C2H2-type 8" evidence="1">
    <location>
        <begin position="551"/>
        <end position="573"/>
    </location>
</feature>
<feature type="zinc finger region" description="C2H2-type 9" evidence="1">
    <location>
        <begin position="579"/>
        <end position="601"/>
    </location>
</feature>
<feature type="zinc finger region" description="C2H2-type 10" evidence="1">
    <location>
        <begin position="607"/>
        <end position="629"/>
    </location>
</feature>
<feature type="region of interest" description="Disordered" evidence="2">
    <location>
        <begin position="201"/>
        <end position="350"/>
    </location>
</feature>
<feature type="compositionally biased region" description="Polar residues" evidence="2">
    <location>
        <begin position="275"/>
        <end position="285"/>
    </location>
</feature>
<feature type="compositionally biased region" description="Low complexity" evidence="2">
    <location>
        <begin position="287"/>
        <end position="296"/>
    </location>
</feature>
<feature type="modified residue" description="Phosphothreonine" evidence="5 6">
    <location>
        <position position="322"/>
    </location>
</feature>
<feature type="sequence variant" id="VAR_074612" description="In EVR6; uncertain significance; does not affect localization to the nucleus; dbSNP:rs536561101." evidence="3">
    <original>S</original>
    <variation>N</variation>
    <location>
        <position position="126"/>
    </location>
</feature>
<feature type="sequence variant" id="VAR_052823" description="In dbSNP:rs36017347.">
    <original>R</original>
    <variation>P</variation>
    <location>
        <position position="337"/>
    </location>
</feature>
<feature type="sequence variant" id="VAR_074613" description="In EVR6; severely decreased localization to the nucleus; dbSNP:rs373273223." evidence="3">
    <original>H</original>
    <variation>Y</variation>
    <location>
        <position position="455"/>
    </location>
</feature>
<feature type="sequence variant" id="VAR_074614" description="In dbSNP:rs561740128." evidence="4">
    <original>G</original>
    <variation>R</variation>
    <location>
        <position position="492"/>
    </location>
</feature>
<feature type="sequence variant" id="VAR_074615" description="In RP72; decreased localization to the nucleus; dbSNP:rs781192528." evidence="4">
    <original>R</original>
    <variation>C</variation>
    <location>
        <position position="541"/>
    </location>
</feature>
<feature type="sequence variant" id="VAR_074616" evidence="4">
    <original>Q</original>
    <variation>K</variation>
    <location>
        <position position="583"/>
    </location>
</feature>
<protein>
    <recommendedName>
        <fullName>Zinc finger protein 408</fullName>
    </recommendedName>
    <alternativeName>
        <fullName>PR domain zinc finger protein 17</fullName>
    </alternativeName>
</protein>
<sequence>MEEAEELLLEGKKALQLAREPRLGLDLGWNPSGEGCTQGLKDVPPEPTRDILALKSLPRGLALGPSLAKEQRLGVWCVGDPLQPGLLWGPLEEESASKEKGEGVKPRQEENLSLGPWGDVCACEQSSGWTSLVQRGRLESEGNVAPVRISERLHLQVYQLVLPGSELLLWPQPSSEGPSLTQPGLDKEAAVAVVTEVESAVQQEVASPGEDAAEPCIDPGSQSPSGIQAENMVSPGLKFPTQDRISKDSQPLGPLLQDGDVDEECPAQAQMPPELQSNSATQQDPDGSGASFSSSARGTQPHGYLAKKLHSPSDQCPPRAKTPEPGAQQSGFPTLSRSPPGPAGSSPKQGRRYRCGECGKAFLQLCHLKKHAFVHTGHKPFLCTECGKSYSSEESFKAHMLGHRGVRPFPCPQCDKAYGTQRDLKEHQVVHSGARPFACDQCGKAFARRPSLRLHRKTHQVPAAPAPCPCPVCGRPLANQGSLRNHMRLHTGEKPFLCPHCGRAFRQRGNLRGHLRLHTGERPYRCPHCADAFPQLPELRRHLISHTGEAHLCPVCGKALRDPHTLRAHERLHSGERPFPCPQCGRAYTLATKLRRHLKSHLEDKPYRCPTCGMGYTLPQSLRRHQLSHRPEAPCSPPSVPSAASEPTVVLLQAEPQLLDTHREEEVSPARDVVEVTISESQEKCFVVPEEPDAAPSLVLIHKDMGLGAWAEVVEVEMGT</sequence>
<keyword id="KW-0225">Disease variant</keyword>
<keyword id="KW-0238">DNA-binding</keyword>
<keyword id="KW-0479">Metal-binding</keyword>
<keyword id="KW-0539">Nucleus</keyword>
<keyword id="KW-0597">Phosphoprotein</keyword>
<keyword id="KW-1267">Proteomics identification</keyword>
<keyword id="KW-1185">Reference proteome</keyword>
<keyword id="KW-0677">Repeat</keyword>
<keyword id="KW-0682">Retinitis pigmentosa</keyword>
<keyword id="KW-0804">Transcription</keyword>
<keyword id="KW-0805">Transcription regulation</keyword>
<keyword id="KW-0862">Zinc</keyword>
<keyword id="KW-0863">Zinc-finger</keyword>
<organism>
    <name type="scientific">Homo sapiens</name>
    <name type="common">Human</name>
    <dbReference type="NCBI Taxonomy" id="9606"/>
    <lineage>
        <taxon>Eukaryota</taxon>
        <taxon>Metazoa</taxon>
        <taxon>Chordata</taxon>
        <taxon>Craniata</taxon>
        <taxon>Vertebrata</taxon>
        <taxon>Euteleostomi</taxon>
        <taxon>Mammalia</taxon>
        <taxon>Eutheria</taxon>
        <taxon>Euarchontoglires</taxon>
        <taxon>Primates</taxon>
        <taxon>Haplorrhini</taxon>
        <taxon>Catarrhini</taxon>
        <taxon>Hominidae</taxon>
        <taxon>Homo</taxon>
    </lineage>
</organism>
<proteinExistence type="evidence at protein level"/>
<evidence type="ECO:0000255" key="1">
    <source>
        <dbReference type="PROSITE-ProRule" id="PRU00042"/>
    </source>
</evidence>
<evidence type="ECO:0000256" key="2">
    <source>
        <dbReference type="SAM" id="MobiDB-lite"/>
    </source>
</evidence>
<evidence type="ECO:0000269" key="3">
    <source>
    </source>
</evidence>
<evidence type="ECO:0000269" key="4">
    <source>
    </source>
</evidence>
<evidence type="ECO:0007744" key="5">
    <source>
    </source>
</evidence>
<evidence type="ECO:0007744" key="6">
    <source>
    </source>
</evidence>
<accession>Q9H9D4</accession>
<reference key="1">
    <citation type="submission" date="2001-02" db="EMBL/GenBank/DDBJ databases">
        <title>A family of novel PR-domain (PRDM) genes as candidate tumor suppressors.</title>
        <authorList>
            <person name="Du Y."/>
            <person name="Huang S."/>
        </authorList>
    </citation>
    <scope>NUCLEOTIDE SEQUENCE [MRNA]</scope>
</reference>
<reference key="2">
    <citation type="journal article" date="2004" name="Nat. Genet.">
        <title>Complete sequencing and characterization of 21,243 full-length human cDNAs.</title>
        <authorList>
            <person name="Ota T."/>
            <person name="Suzuki Y."/>
            <person name="Nishikawa T."/>
            <person name="Otsuki T."/>
            <person name="Sugiyama T."/>
            <person name="Irie R."/>
            <person name="Wakamatsu A."/>
            <person name="Hayashi K."/>
            <person name="Sato H."/>
            <person name="Nagai K."/>
            <person name="Kimura K."/>
            <person name="Makita H."/>
            <person name="Sekine M."/>
            <person name="Obayashi M."/>
            <person name="Nishi T."/>
            <person name="Shibahara T."/>
            <person name="Tanaka T."/>
            <person name="Ishii S."/>
            <person name="Yamamoto J."/>
            <person name="Saito K."/>
            <person name="Kawai Y."/>
            <person name="Isono Y."/>
            <person name="Nakamura Y."/>
            <person name="Nagahari K."/>
            <person name="Murakami K."/>
            <person name="Yasuda T."/>
            <person name="Iwayanagi T."/>
            <person name="Wagatsuma M."/>
            <person name="Shiratori A."/>
            <person name="Sudo H."/>
            <person name="Hosoiri T."/>
            <person name="Kaku Y."/>
            <person name="Kodaira H."/>
            <person name="Kondo H."/>
            <person name="Sugawara M."/>
            <person name="Takahashi M."/>
            <person name="Kanda K."/>
            <person name="Yokoi T."/>
            <person name="Furuya T."/>
            <person name="Kikkawa E."/>
            <person name="Omura Y."/>
            <person name="Abe K."/>
            <person name="Kamihara K."/>
            <person name="Katsuta N."/>
            <person name="Sato K."/>
            <person name="Tanikawa M."/>
            <person name="Yamazaki M."/>
            <person name="Ninomiya K."/>
            <person name="Ishibashi T."/>
            <person name="Yamashita H."/>
            <person name="Murakawa K."/>
            <person name="Fujimori K."/>
            <person name="Tanai H."/>
            <person name="Kimata M."/>
            <person name="Watanabe M."/>
            <person name="Hiraoka S."/>
            <person name="Chiba Y."/>
            <person name="Ishida S."/>
            <person name="Ono Y."/>
            <person name="Takiguchi S."/>
            <person name="Watanabe S."/>
            <person name="Yosida M."/>
            <person name="Hotuta T."/>
            <person name="Kusano J."/>
            <person name="Kanehori K."/>
            <person name="Takahashi-Fujii A."/>
            <person name="Hara H."/>
            <person name="Tanase T.-O."/>
            <person name="Nomura Y."/>
            <person name="Togiya S."/>
            <person name="Komai F."/>
            <person name="Hara R."/>
            <person name="Takeuchi K."/>
            <person name="Arita M."/>
            <person name="Imose N."/>
            <person name="Musashino K."/>
            <person name="Yuuki H."/>
            <person name="Oshima A."/>
            <person name="Sasaki N."/>
            <person name="Aotsuka S."/>
            <person name="Yoshikawa Y."/>
            <person name="Matsunawa H."/>
            <person name="Ichihara T."/>
            <person name="Shiohata N."/>
            <person name="Sano S."/>
            <person name="Moriya S."/>
            <person name="Momiyama H."/>
            <person name="Satoh N."/>
            <person name="Takami S."/>
            <person name="Terashima Y."/>
            <person name="Suzuki O."/>
            <person name="Nakagawa S."/>
            <person name="Senoh A."/>
            <person name="Mizoguchi H."/>
            <person name="Goto Y."/>
            <person name="Shimizu F."/>
            <person name="Wakebe H."/>
            <person name="Hishigaki H."/>
            <person name="Watanabe T."/>
            <person name="Sugiyama A."/>
            <person name="Takemoto M."/>
            <person name="Kawakami B."/>
            <person name="Yamazaki M."/>
            <person name="Watanabe K."/>
            <person name="Kumagai A."/>
            <person name="Itakura S."/>
            <person name="Fukuzumi Y."/>
            <person name="Fujimori Y."/>
            <person name="Komiyama M."/>
            <person name="Tashiro H."/>
            <person name="Tanigami A."/>
            <person name="Fujiwara T."/>
            <person name="Ono T."/>
            <person name="Yamada K."/>
            <person name="Fujii Y."/>
            <person name="Ozaki K."/>
            <person name="Hirao M."/>
            <person name="Ohmori Y."/>
            <person name="Kawabata A."/>
            <person name="Hikiji T."/>
            <person name="Kobatake N."/>
            <person name="Inagaki H."/>
            <person name="Ikema Y."/>
            <person name="Okamoto S."/>
            <person name="Okitani R."/>
            <person name="Kawakami T."/>
            <person name="Noguchi S."/>
            <person name="Itoh T."/>
            <person name="Shigeta K."/>
            <person name="Senba T."/>
            <person name="Matsumura K."/>
            <person name="Nakajima Y."/>
            <person name="Mizuno T."/>
            <person name="Morinaga M."/>
            <person name="Sasaki M."/>
            <person name="Togashi T."/>
            <person name="Oyama M."/>
            <person name="Hata H."/>
            <person name="Watanabe M."/>
            <person name="Komatsu T."/>
            <person name="Mizushima-Sugano J."/>
            <person name="Satoh T."/>
            <person name="Shirai Y."/>
            <person name="Takahashi Y."/>
            <person name="Nakagawa K."/>
            <person name="Okumura K."/>
            <person name="Nagase T."/>
            <person name="Nomura N."/>
            <person name="Kikuchi H."/>
            <person name="Masuho Y."/>
            <person name="Yamashita R."/>
            <person name="Nakai K."/>
            <person name="Yada T."/>
            <person name="Nakamura Y."/>
            <person name="Ohara O."/>
            <person name="Isogai T."/>
            <person name="Sugano S."/>
        </authorList>
    </citation>
    <scope>NUCLEOTIDE SEQUENCE [LARGE SCALE MRNA]</scope>
</reference>
<reference key="3">
    <citation type="journal article" date="2004" name="Genome Res.">
        <title>The status, quality, and expansion of the NIH full-length cDNA project: the Mammalian Gene Collection (MGC).</title>
        <authorList>
            <consortium name="The MGC Project Team"/>
        </authorList>
    </citation>
    <scope>NUCLEOTIDE SEQUENCE [LARGE SCALE MRNA]</scope>
    <source>
        <tissue>Lung</tissue>
        <tissue>Uterus</tissue>
    </source>
</reference>
<reference key="4">
    <citation type="journal article" date="2013" name="J. Proteome Res.">
        <title>Toward a comprehensive characterization of a human cancer cell phosphoproteome.</title>
        <authorList>
            <person name="Zhou H."/>
            <person name="Di Palma S."/>
            <person name="Preisinger C."/>
            <person name="Peng M."/>
            <person name="Polat A.N."/>
            <person name="Heck A.J."/>
            <person name="Mohammed S."/>
        </authorList>
    </citation>
    <scope>PHOSPHORYLATION [LARGE SCALE ANALYSIS] AT THR-322</scope>
    <scope>IDENTIFICATION BY MASS SPECTROMETRY [LARGE SCALE ANALYSIS]</scope>
    <source>
        <tissue>Cervix carcinoma</tissue>
        <tissue>Erythroleukemia</tissue>
    </source>
</reference>
<reference key="5">
    <citation type="journal article" date="2013" name="Proc. Natl. Acad. Sci. U.S.A.">
        <title>ZNF408 is mutated in familial exudative vitreoretinopathy and is crucial for the development of zebrafish retinal vasculature.</title>
        <authorList>
            <person name="Collin R.W."/>
            <person name="Nikopoulos K."/>
            <person name="Dona M."/>
            <person name="Gilissen C."/>
            <person name="Hoischen A."/>
            <person name="Boonstra F.N."/>
            <person name="Poulter J.A."/>
            <person name="Kondo H."/>
            <person name="Berger W."/>
            <person name="Toomes C."/>
            <person name="Tahira T."/>
            <person name="Mohn L.R."/>
            <person name="Blokland E.A."/>
            <person name="Hetterschijt L."/>
            <person name="Ali M."/>
            <person name="Groothuismink J.M."/>
            <person name="Duijkers L."/>
            <person name="Inglehearn C.F."/>
            <person name="Sollfrank L."/>
            <person name="Strom T.M."/>
            <person name="Uchio E."/>
            <person name="van Nouhuys C.E."/>
            <person name="Kremer H."/>
            <person name="Veltman J.A."/>
            <person name="van Wijk E."/>
            <person name="Cremers F.P."/>
        </authorList>
    </citation>
    <scope>TISSUE SPECIFICITY</scope>
    <scope>SUBCELLULAR LOCATION</scope>
    <scope>INVOLVEMENT IN EVR6</scope>
    <scope>VARIANTS EVR6 ASN-126 AND TYR-455</scope>
    <scope>CHARACTERIZATION OF VARIANTS EVR6 ASN-126 AND TYR-455</scope>
</reference>
<reference key="6">
    <citation type="journal article" date="2014" name="J. Proteomics">
        <title>An enzyme assisted RP-RPLC approach for in-depth analysis of human liver phosphoproteome.</title>
        <authorList>
            <person name="Bian Y."/>
            <person name="Song C."/>
            <person name="Cheng K."/>
            <person name="Dong M."/>
            <person name="Wang F."/>
            <person name="Huang J."/>
            <person name="Sun D."/>
            <person name="Wang L."/>
            <person name="Ye M."/>
            <person name="Zou H."/>
        </authorList>
    </citation>
    <scope>PHOSPHORYLATION [LARGE SCALE ANALYSIS] AT THR-322</scope>
    <scope>IDENTIFICATION BY MASS SPECTROMETRY [LARGE SCALE ANALYSIS]</scope>
    <source>
        <tissue>Liver</tissue>
    </source>
</reference>
<reference key="7">
    <citation type="journal article" date="2015" name="Hum. Mol. Genet.">
        <title>Whole-exome sequencing reveals ZNF408 as a new gene associated with autosomal recessive retinitis pigmentosa with vitreal alterations.</title>
        <authorList>
            <person name="Avila-Fernandez A."/>
            <person name="Perez-Carro R."/>
            <person name="Corton M."/>
            <person name="Lopez-Molina M.I."/>
            <person name="Campello L."/>
            <person name="Garanto A."/>
            <person name="Fernandez-Sanchez L."/>
            <person name="Duijkers L."/>
            <person name="Lopez-Martinez M.A."/>
            <person name="Riveiro-Alvarez R."/>
            <person name="Da Silva L.R."/>
            <person name="Sanchez-Alcudia R."/>
            <person name="Martin-Garrido E."/>
            <person name="Reyes N."/>
            <person name="Garcia-Garcia F."/>
            <person name="Dopazo J."/>
            <person name="Garcia-Sandoval B."/>
            <person name="Collin R.W."/>
            <person name="Cuenca N."/>
            <person name="Ayuso C."/>
        </authorList>
    </citation>
    <scope>TISSUE SPECIFICITY</scope>
    <scope>SUBCELLULAR LOCATION</scope>
    <scope>INVOLVEMENT IN RP72</scope>
    <scope>VARIANTS ARG-492 AND LYS-583</scope>
    <scope>VARIANT RP72 CYS-541</scope>
    <scope>CHARACTERIZATION OF VARIANT RP72 CYS-541</scope>
</reference>
<comment type="function">
    <text>May be involved in transcriptional regulation.</text>
</comment>
<comment type="interaction">
    <interactant intactId="EBI-347633">
        <id>Q9H9D4</id>
    </interactant>
    <interactant intactId="EBI-10255023">
        <id>Q6ZN18-2</id>
        <label>AEBP2</label>
    </interactant>
    <organismsDiffer>false</organismsDiffer>
    <experiments>3</experiments>
</comment>
<comment type="interaction">
    <interactant intactId="EBI-347633">
        <id>Q9H9D4</id>
    </interactant>
    <interactant intactId="EBI-12119298">
        <id>Q8WTP8-2</id>
        <label>AEN</label>
    </interactant>
    <organismsDiffer>false</organismsDiffer>
    <experiments>3</experiments>
</comment>
<comment type="interaction">
    <interactant intactId="EBI-347633">
        <id>Q9H9D4</id>
    </interactant>
    <interactant intactId="EBI-1044593">
        <id>Q9NRW3</id>
        <label>APOBEC3C</label>
    </interactant>
    <organismsDiffer>false</organismsDiffer>
    <experiments>3</experiments>
</comment>
<comment type="interaction">
    <interactant intactId="EBI-347633">
        <id>Q9H9D4</id>
    </interactant>
    <interactant intactId="EBI-742750">
        <id>Q8TBE0</id>
        <label>BAHD1</label>
    </interactant>
    <organismsDiffer>false</organismsDiffer>
    <experiments>3</experiments>
</comment>
<comment type="interaction">
    <interactant intactId="EBI-347633">
        <id>Q9H9D4</id>
    </interactant>
    <interactant intactId="EBI-739580">
        <id>Q13137</id>
        <label>CALCOCO2</label>
    </interactant>
    <organismsDiffer>false</organismsDiffer>
    <experiments>4</experiments>
</comment>
<comment type="interaction">
    <interactant intactId="EBI-347633">
        <id>Q9H9D4</id>
    </interactant>
    <interactant intactId="EBI-739624">
        <id>Q8NHQ1</id>
        <label>CEP70</label>
    </interactant>
    <organismsDiffer>false</organismsDiffer>
    <experiments>9</experiments>
</comment>
<comment type="interaction">
    <interactant intactId="EBI-347633">
        <id>Q9H9D4</id>
    </interactant>
    <interactant intactId="EBI-3867333">
        <id>A8MQ03</id>
        <label>CYSRT1</label>
    </interactant>
    <organismsDiffer>false</organismsDiffer>
    <experiments>3</experiments>
</comment>
<comment type="interaction">
    <interactant intactId="EBI-347633">
        <id>Q9H9D4</id>
    </interactant>
    <interactant intactId="EBI-739789">
        <id>Q92997</id>
        <label>DVL3</label>
    </interactant>
    <organismsDiffer>false</organismsDiffer>
    <experiments>4</experiments>
</comment>
<comment type="interaction">
    <interactant intactId="EBI-347633">
        <id>Q9H9D4</id>
    </interactant>
    <interactant intactId="EBI-301735">
        <id>Q13868</id>
        <label>EXOSC2</label>
    </interactant>
    <organismsDiffer>false</organismsDiffer>
    <experiments>3</experiments>
</comment>
<comment type="interaction">
    <interactant intactId="EBI-347633">
        <id>Q9H9D4</id>
    </interactant>
    <interactant intactId="EBI-701903">
        <id>Q14192</id>
        <label>FHL2</label>
    </interactant>
    <organismsDiffer>false</organismsDiffer>
    <experiments>3</experiments>
</comment>
<comment type="interaction">
    <interactant intactId="EBI-347633">
        <id>Q9H9D4</id>
    </interactant>
    <interactant intactId="EBI-750641">
        <id>Q5TD97</id>
        <label>FHL5</label>
    </interactant>
    <organismsDiffer>false</organismsDiffer>
    <experiments>3</experiments>
</comment>
<comment type="interaction">
    <interactant intactId="EBI-347633">
        <id>Q9H9D4</id>
    </interactant>
    <interactant intactId="EBI-5661036">
        <id>A1L4K1</id>
        <label>FSD2</label>
    </interactant>
    <organismsDiffer>false</organismsDiffer>
    <experiments>3</experiments>
</comment>
<comment type="interaction">
    <interactant intactId="EBI-347633">
        <id>Q9H9D4</id>
    </interactant>
    <interactant intactId="EBI-5666657">
        <id>Q9NWQ4</id>
        <label>GPATCH2L</label>
    </interactant>
    <organismsDiffer>false</organismsDiffer>
    <experiments>3</experiments>
</comment>
<comment type="interaction">
    <interactant intactId="EBI-347633">
        <id>Q9H9D4</id>
    </interactant>
    <interactant intactId="EBI-7060731">
        <id>P61978-2</id>
        <label>HNRNPK</label>
    </interactant>
    <organismsDiffer>false</organismsDiffer>
    <experiments>3</experiments>
</comment>
<comment type="interaction">
    <interactant intactId="EBI-347633">
        <id>Q9H9D4</id>
    </interactant>
    <interactant intactId="EBI-4397613">
        <id>Q7L273</id>
        <label>KCTD9</label>
    </interactant>
    <organismsDiffer>false</organismsDiffer>
    <experiments>3</experiments>
</comment>
<comment type="interaction">
    <interactant intactId="EBI-347633">
        <id>Q9H9D4</id>
    </interactant>
    <interactant intactId="EBI-722504">
        <id>O75525</id>
        <label>KHDRBS3</label>
    </interactant>
    <organismsDiffer>false</organismsDiffer>
    <experiments>4</experiments>
</comment>
<comment type="interaction">
    <interactant intactId="EBI-347633">
        <id>Q9H9D4</id>
    </interactant>
    <interactant intactId="EBI-10171697">
        <id>Q6A162</id>
        <label>KRT40</label>
    </interactant>
    <organismsDiffer>false</organismsDiffer>
    <experiments>3</experiments>
</comment>
<comment type="interaction">
    <interactant intactId="EBI-347633">
        <id>Q9H9D4</id>
    </interactant>
    <interactant intactId="EBI-11959885">
        <id>Q07627</id>
        <label>KRTAP1-1</label>
    </interactant>
    <organismsDiffer>false</organismsDiffer>
    <experiments>3</experiments>
</comment>
<comment type="interaction">
    <interactant intactId="EBI-347633">
        <id>Q9H9D4</id>
    </interactant>
    <interactant intactId="EBI-10172290">
        <id>P60409</id>
        <label>KRTAP10-7</label>
    </interactant>
    <organismsDiffer>false</organismsDiffer>
    <experiments>3</experiments>
</comment>
<comment type="interaction">
    <interactant intactId="EBI-347633">
        <id>Q9H9D4</id>
    </interactant>
    <interactant intactId="EBI-10171774">
        <id>P60410</id>
        <label>KRTAP10-8</label>
    </interactant>
    <organismsDiffer>false</organismsDiffer>
    <experiments>3</experiments>
</comment>
<comment type="interaction">
    <interactant intactId="EBI-347633">
        <id>Q9H9D4</id>
    </interactant>
    <interactant intactId="EBI-10176379">
        <id>P59991</id>
        <label>KRTAP12-2</label>
    </interactant>
    <organismsDiffer>false</organismsDiffer>
    <experiments>3</experiments>
</comment>
<comment type="interaction">
    <interactant intactId="EBI-347633">
        <id>Q9H9D4</id>
    </interactant>
    <interactant intactId="EBI-11953334">
        <id>P60328</id>
        <label>KRTAP12-3</label>
    </interactant>
    <organismsDiffer>false</organismsDiffer>
    <experiments>3</experiments>
</comment>
<comment type="interaction">
    <interactant intactId="EBI-347633">
        <id>Q9H9D4</id>
    </interactant>
    <interactant intactId="EBI-3958099">
        <id>P26371</id>
        <label>KRTAP5-9</label>
    </interactant>
    <organismsDiffer>false</organismsDiffer>
    <experiments>3</experiments>
</comment>
<comment type="interaction">
    <interactant intactId="EBI-347633">
        <id>Q9H9D4</id>
    </interactant>
    <interactant intactId="EBI-740738">
        <id>O95751</id>
        <label>LDOC1</label>
    </interactant>
    <organismsDiffer>false</organismsDiffer>
    <experiments>3</experiments>
</comment>
<comment type="interaction">
    <interactant intactId="EBI-347633">
        <id>Q9H9D4</id>
    </interactant>
    <interactant intactId="EBI-347416">
        <id>Q9Y333</id>
        <label>LSM2</label>
    </interactant>
    <organismsDiffer>false</organismsDiffer>
    <experiments>4</experiments>
</comment>
<comment type="interaction">
    <interactant intactId="EBI-347633">
        <id>Q9H9D4</id>
    </interactant>
    <interactant intactId="EBI-741037">
        <id>Q9BRK4</id>
        <label>LZTS2</label>
    </interactant>
    <organismsDiffer>false</organismsDiffer>
    <experiments>5</experiments>
</comment>
<comment type="interaction">
    <interactant intactId="EBI-347633">
        <id>Q9H9D4</id>
    </interactant>
    <interactant intactId="EBI-724076">
        <id>Q99750</id>
        <label>MDFI</label>
    </interactant>
    <organismsDiffer>false</organismsDiffer>
    <experiments>6</experiments>
</comment>
<comment type="interaction">
    <interactant intactId="EBI-347633">
        <id>Q9H9D4</id>
    </interactant>
    <interactant intactId="EBI-10172526">
        <id>Q9UJV3-2</id>
        <label>MID2</label>
    </interactant>
    <organismsDiffer>false</organismsDiffer>
    <experiments>3</experiments>
</comment>
<comment type="interaction">
    <interactant intactId="EBI-347633">
        <id>Q9H9D4</id>
    </interactant>
    <interactant intactId="EBI-2855755">
        <id>Q96E11</id>
        <label>MRRF</label>
    </interactant>
    <organismsDiffer>false</organismsDiffer>
    <experiments>3</experiments>
</comment>
<comment type="interaction">
    <interactant intactId="EBI-347633">
        <id>Q9H9D4</id>
    </interactant>
    <interactant intactId="EBI-11522433">
        <id>Q5JR59-3</id>
        <label>MTUS2</label>
    </interactant>
    <organismsDiffer>false</organismsDiffer>
    <experiments>3</experiments>
</comment>
<comment type="interaction">
    <interactant intactId="EBI-347633">
        <id>Q9H9D4</id>
    </interactant>
    <interactant intactId="EBI-22310682">
        <id>P0DPK4</id>
        <label>NOTCH2NLC</label>
    </interactant>
    <organismsDiffer>false</organismsDiffer>
    <experiments>3</experiments>
</comment>
<comment type="interaction">
    <interactant intactId="EBI-347633">
        <id>Q9H9D4</id>
    </interactant>
    <interactant intactId="EBI-1105124">
        <id>Q5VU43</id>
        <label>PDE4DIP</label>
    </interactant>
    <organismsDiffer>false</organismsDiffer>
    <experiments>3</experiments>
</comment>
<comment type="interaction">
    <interactant intactId="EBI-347633">
        <id>Q9H9D4</id>
    </interactant>
    <interactant intactId="EBI-79165">
        <id>Q9NRD5</id>
        <label>PICK1</label>
    </interactant>
    <organismsDiffer>false</organismsDiffer>
    <experiments>3</experiments>
</comment>
<comment type="interaction">
    <interactant intactId="EBI-347633">
        <id>Q9H9D4</id>
    </interactant>
    <interactant intactId="EBI-302355">
        <id>Q9UL42</id>
        <label>PNMA2</label>
    </interactant>
    <organismsDiffer>false</organismsDiffer>
    <experiments>3</experiments>
</comment>
<comment type="interaction">
    <interactant intactId="EBI-347633">
        <id>Q9H9D4</id>
    </interactant>
    <interactant intactId="EBI-1567797">
        <id>Q8WWY3</id>
        <label>PRPF31</label>
    </interactant>
    <organismsDiffer>false</organismsDiffer>
    <experiments>3</experiments>
</comment>
<comment type="interaction">
    <interactant intactId="EBI-347633">
        <id>Q9H9D4</id>
    </interactant>
    <interactant intactId="EBI-1050964">
        <id>O43586</id>
        <label>PSTPIP1</label>
    </interactant>
    <organismsDiffer>false</organismsDiffer>
    <experiments>3</experiments>
</comment>
<comment type="interaction">
    <interactant intactId="EBI-347633">
        <id>Q9H9D4</id>
    </interactant>
    <interactant intactId="EBI-9512693">
        <id>Q53GL6</id>
        <label>RALY</label>
    </interactant>
    <organismsDiffer>false</organismsDiffer>
    <experiments>3</experiments>
</comment>
<comment type="interaction">
    <interactant intactId="EBI-347633">
        <id>Q9H9D4</id>
    </interactant>
    <interactant intactId="EBI-721525">
        <id>P98175</id>
        <label>RBM10</label>
    </interactant>
    <organismsDiffer>false</organismsDiffer>
    <experiments>3</experiments>
</comment>
<comment type="interaction">
    <interactant intactId="EBI-347633">
        <id>Q9H9D4</id>
    </interactant>
    <interactant intactId="EBI-8642021">
        <id>Q15415</id>
        <label>RBMY1J</label>
    </interactant>
    <organismsDiffer>false</organismsDiffer>
    <experiments>3</experiments>
</comment>
<comment type="interaction">
    <interactant intactId="EBI-347633">
        <id>Q9H9D4</id>
    </interactant>
    <interactant intactId="EBI-5235340">
        <id>Q7Z699</id>
        <label>SPRED1</label>
    </interactant>
    <organismsDiffer>false</organismsDiffer>
    <experiments>3</experiments>
</comment>
<comment type="interaction">
    <interactant intactId="EBI-347633">
        <id>Q9H9D4</id>
    </interactant>
    <interactant intactId="EBI-2212028">
        <id>Q9Y2D8</id>
        <label>SSX2IP</label>
    </interactant>
    <organismsDiffer>false</organismsDiffer>
    <experiments>3</experiments>
</comment>
<comment type="interaction">
    <interactant intactId="EBI-347633">
        <id>Q9H9D4</id>
    </interactant>
    <interactant intactId="EBI-741515">
        <id>Q9NVV9</id>
        <label>THAP1</label>
    </interactant>
    <organismsDiffer>false</organismsDiffer>
    <experiments>4</experiments>
</comment>
<comment type="interaction">
    <interactant intactId="EBI-347633">
        <id>Q9H9D4</id>
    </interactant>
    <interactant intactId="EBI-11741437">
        <id>Q08117-2</id>
        <label>TLE5</label>
    </interactant>
    <organismsDiffer>false</organismsDiffer>
    <experiments>3</experiments>
</comment>
<comment type="interaction">
    <interactant intactId="EBI-347633">
        <id>Q9H9D4</id>
    </interactant>
    <interactant intactId="EBI-740098">
        <id>P36406</id>
        <label>TRIM23</label>
    </interactant>
    <organismsDiffer>false</organismsDiffer>
    <experiments>3</experiments>
</comment>
<comment type="interaction">
    <interactant intactId="EBI-347633">
        <id>Q9H9D4</id>
    </interactant>
    <interactant intactId="EBI-725997">
        <id>Q8WV44</id>
        <label>TRIM41</label>
    </interactant>
    <organismsDiffer>false</organismsDiffer>
    <experiments>5</experiments>
</comment>
<comment type="interaction">
    <interactant intactId="EBI-347633">
        <id>Q9H9D4</id>
    </interactant>
    <interactant intactId="EBI-10180829">
        <id>Q7KZS0</id>
        <label>UBE2I</label>
    </interactant>
    <organismsDiffer>false</organismsDiffer>
    <experiments>3</experiments>
</comment>
<comment type="interaction">
    <interactant intactId="EBI-347633">
        <id>Q9H9D4</id>
    </interactant>
    <interactant intactId="EBI-2511991">
        <id>Q9Y2K6</id>
        <label>USP20</label>
    </interactant>
    <organismsDiffer>false</organismsDiffer>
    <experiments>3</experiments>
</comment>
<comment type="interaction">
    <interactant intactId="EBI-347633">
        <id>Q9H9D4</id>
    </interactant>
    <interactant intactId="EBI-3918996">
        <id>Q9HCK0</id>
        <label>ZBTB26</label>
    </interactant>
    <organismsDiffer>false</organismsDiffer>
    <experiments>3</experiments>
</comment>
<comment type="interaction">
    <interactant intactId="EBI-347633">
        <id>Q9H9D4</id>
    </interactant>
    <interactant intactId="EBI-744864">
        <id>P10074</id>
        <label>ZBTB48</label>
    </interactant>
    <organismsDiffer>false</organismsDiffer>
    <experiments>3</experiments>
</comment>
<comment type="interaction">
    <interactant intactId="EBI-347633">
        <id>Q9H9D4</id>
    </interactant>
    <interactant intactId="EBI-742740">
        <id>Q96BR9</id>
        <label>ZBTB8A</label>
    </interactant>
    <organismsDiffer>false</organismsDiffer>
    <experiments>4</experiments>
</comment>
<comment type="interaction">
    <interactant intactId="EBI-347633">
        <id>Q9H9D4</id>
    </interactant>
    <interactant intactId="EBI-395708">
        <id>Q96C00</id>
        <label>ZBTB9</label>
    </interactant>
    <organismsDiffer>false</organismsDiffer>
    <experiments>3</experiments>
</comment>
<comment type="interaction">
    <interactant intactId="EBI-347633">
        <id>Q9H9D4</id>
    </interactant>
    <interactant intactId="EBI-747993">
        <id>Q9NQZ6</id>
        <label>ZC4H2</label>
    </interactant>
    <organismsDiffer>false</organismsDiffer>
    <experiments>3</experiments>
</comment>
<comment type="interaction">
    <interactant intactId="EBI-347633">
        <id>Q9H9D4</id>
    </interactant>
    <interactant intactId="EBI-1210473">
        <id>Q96PQ6</id>
        <label>ZNF317</label>
    </interactant>
    <organismsDiffer>false</organismsDiffer>
    <experiments>3</experiments>
</comment>
<comment type="interaction">
    <interactant intactId="EBI-347633">
        <id>Q9H9D4</id>
    </interactant>
    <interactant intactId="EBI-373456">
        <id>Q9Y3S2</id>
        <label>ZNF330</label>
    </interactant>
    <organismsDiffer>false</organismsDiffer>
    <experiments>4</experiments>
</comment>
<comment type="interaction">
    <interactant intactId="EBI-347633">
        <id>Q9H9D4</id>
    </interactant>
    <interactant intactId="EBI-347633">
        <id>Q9H9D4</id>
        <label>ZNF408</label>
    </interactant>
    <organismsDiffer>false</organismsDiffer>
    <experiments>8</experiments>
</comment>
<comment type="interaction">
    <interactant intactId="EBI-347633">
        <id>Q9H9D4</id>
    </interactant>
    <interactant intactId="EBI-751409">
        <id>Q8WTR7</id>
        <label>ZNF473</label>
    </interactant>
    <organismsDiffer>false</organismsDiffer>
    <experiments>3</experiments>
</comment>
<comment type="interaction">
    <interactant intactId="EBI-347633">
        <id>Q9H9D4</id>
    </interactant>
    <interactant intactId="EBI-11035148">
        <id>Q8TF50</id>
        <label>ZNF526</label>
    </interactant>
    <organismsDiffer>false</organismsDiffer>
    <experiments>3</experiments>
</comment>
<comment type="interaction">
    <interactant intactId="EBI-347633">
        <id>Q9H9D4</id>
    </interactant>
    <interactant intactId="EBI-745775">
        <id>Q96H86</id>
        <label>ZNF764</label>
    </interactant>
    <organismsDiffer>false</organismsDiffer>
    <experiments>3</experiments>
</comment>
<comment type="interaction">
    <interactant intactId="EBI-347633">
        <id>Q9H9D4</id>
    </interactant>
    <interactant intactId="EBI-10240849">
        <id>Q3KQV3</id>
        <label>ZNF792</label>
    </interactant>
    <organismsDiffer>false</organismsDiffer>
    <experiments>6</experiments>
</comment>
<comment type="interaction">
    <interactant intactId="EBI-347633">
        <id>Q9H9D4</id>
    </interactant>
    <interactant intactId="EBI-11962574">
        <id>Q96EG3</id>
        <label>ZNF837</label>
    </interactant>
    <organismsDiffer>false</organismsDiffer>
    <experiments>3</experiments>
</comment>
<comment type="interaction">
    <interactant intactId="EBI-347633">
        <id>Q9H9D4</id>
    </interactant>
    <interactant intactId="EBI-527853">
        <id>Q9UGI0</id>
        <label>ZRANB1</label>
    </interactant>
    <organismsDiffer>false</organismsDiffer>
    <experiments>3</experiments>
</comment>
<comment type="subcellular location">
    <subcellularLocation>
        <location evidence="3 4">Nucleus</location>
    </subcellularLocation>
</comment>
<comment type="tissue specificity">
    <text evidence="3 4">Highest expression is observed in adult retina; abundantly expressed in the fetal eye (PubMed:23716654). In the retina, it is detected in the outer nuclear layer, especially cone and rod photoreceptor cells, ganglion cell layer and both outer and inner plexiform layers (at protein level) (PubMed:25882705). Expressed in retinal blood vessels (at protein level) (PubMed:25882705).</text>
</comment>
<comment type="disease" evidence="3">
    <disease id="DI-04484">
        <name>Vitreoretinopathy, exudative 6</name>
        <acronym>EVR6</acronym>
        <description>A form of exudative vitreoretinopathy, a disorder of the retinal vasculature characterized by an abrupt cessation of growth of peripheral capillaries, leading to an avascular peripheral retina. This may lead to compensatory retinal neovascularization, which is thought to be induced by hypoxia from the initial avascular insult. New vessels are prone to leakage and rupture causing exudates and bleeding, followed by scarring, retinal detachment and blindness. Clinical features can be highly variable, even within the same family. Patients with mild forms of the disease are asymptomatic, and their only disease related abnormality is an arc of avascular retina in the extreme temporal periphery.</description>
        <dbReference type="MIM" id="616468"/>
    </disease>
    <text>The disease is caused by variants affecting the gene represented in this entry.</text>
</comment>
<comment type="disease" evidence="4">
    <disease id="DI-04485">
        <name>Retinitis pigmentosa 72</name>
        <acronym>RP72</acronym>
        <description>A retinal dystrophy belonging to the group of pigmentary retinopathies. Retinitis pigmentosa is characterized by retinal pigment deposits visible on fundus examination and primary loss of rod photoreceptor cells followed by secondary loss of cone photoreceptors. Patients typically have night vision blindness and loss of midperipheral visual field. As their condition progresses, they lose their far peripheral visual field and eventually central vision as well.</description>
        <dbReference type="MIM" id="616469"/>
    </disease>
    <text>The disease is caused by variants affecting the gene represented in this entry.</text>
</comment>
<dbReference type="EMBL" id="AF346626">
    <property type="protein sequence ID" value="AAK29075.1"/>
    <property type="molecule type" value="mRNA"/>
</dbReference>
<dbReference type="EMBL" id="AK022889">
    <property type="protein sequence ID" value="BAB14295.1"/>
    <property type="molecule type" value="mRNA"/>
</dbReference>
<dbReference type="EMBL" id="BC013355">
    <property type="protein sequence ID" value="AAH13355.1"/>
    <property type="molecule type" value="mRNA"/>
</dbReference>
<dbReference type="EMBL" id="BC015708">
    <property type="protein sequence ID" value="AAH15708.1"/>
    <property type="molecule type" value="mRNA"/>
</dbReference>
<dbReference type="CCDS" id="CCDS7923.1"/>
<dbReference type="RefSeq" id="NP_001171680.1">
    <property type="nucleotide sequence ID" value="NM_001184751.1"/>
</dbReference>
<dbReference type="RefSeq" id="NP_079017.1">
    <property type="nucleotide sequence ID" value="NM_024741.3"/>
</dbReference>
<dbReference type="SMR" id="Q9H9D4"/>
<dbReference type="BioGRID" id="122894">
    <property type="interactions" value="148"/>
</dbReference>
<dbReference type="FunCoup" id="Q9H9D4">
    <property type="interactions" value="1657"/>
</dbReference>
<dbReference type="IntAct" id="Q9H9D4">
    <property type="interactions" value="132"/>
</dbReference>
<dbReference type="MINT" id="Q9H9D4"/>
<dbReference type="STRING" id="9606.ENSP00000309606"/>
<dbReference type="iPTMnet" id="Q9H9D4"/>
<dbReference type="PhosphoSitePlus" id="Q9H9D4"/>
<dbReference type="BioMuta" id="ZNF408"/>
<dbReference type="DMDM" id="17368963"/>
<dbReference type="jPOST" id="Q9H9D4"/>
<dbReference type="MassIVE" id="Q9H9D4"/>
<dbReference type="PaxDb" id="9606-ENSP00000309606"/>
<dbReference type="PeptideAtlas" id="Q9H9D4"/>
<dbReference type="ProteomicsDB" id="81314"/>
<dbReference type="ABCD" id="Q9H9D4">
    <property type="antibodies" value="1 sequenced antibody"/>
</dbReference>
<dbReference type="Antibodypedia" id="13426">
    <property type="antibodies" value="177 antibodies from 20 providers"/>
</dbReference>
<dbReference type="DNASU" id="79797"/>
<dbReference type="Ensembl" id="ENST00000311764.3">
    <property type="protein sequence ID" value="ENSP00000309606.2"/>
    <property type="gene ID" value="ENSG00000175213.3"/>
</dbReference>
<dbReference type="GeneID" id="79797"/>
<dbReference type="KEGG" id="hsa:79797"/>
<dbReference type="MANE-Select" id="ENST00000311764.3">
    <property type="protein sequence ID" value="ENSP00000309606.2"/>
    <property type="RefSeq nucleotide sequence ID" value="NM_024741.3"/>
    <property type="RefSeq protein sequence ID" value="NP_079017.1"/>
</dbReference>
<dbReference type="UCSC" id="uc001nde.3">
    <property type="organism name" value="human"/>
</dbReference>
<dbReference type="AGR" id="HGNC:20041"/>
<dbReference type="CTD" id="79797"/>
<dbReference type="DisGeNET" id="79797"/>
<dbReference type="GeneCards" id="ZNF408"/>
<dbReference type="HGNC" id="HGNC:20041">
    <property type="gene designation" value="ZNF408"/>
</dbReference>
<dbReference type="HPA" id="ENSG00000175213">
    <property type="expression patterns" value="Low tissue specificity"/>
</dbReference>
<dbReference type="MalaCards" id="ZNF408"/>
<dbReference type="MIM" id="616454">
    <property type="type" value="gene"/>
</dbReference>
<dbReference type="MIM" id="616468">
    <property type="type" value="phenotype"/>
</dbReference>
<dbReference type="MIM" id="616469">
    <property type="type" value="phenotype"/>
</dbReference>
<dbReference type="neXtProt" id="NX_Q9H9D4"/>
<dbReference type="OpenTargets" id="ENSG00000175213"/>
<dbReference type="Orphanet" id="891">
    <property type="disease" value="Familial exudative vitreoretinopathy"/>
</dbReference>
<dbReference type="Orphanet" id="791">
    <property type="disease" value="Retinitis pigmentosa"/>
</dbReference>
<dbReference type="PharmGKB" id="PA134936136"/>
<dbReference type="VEuPathDB" id="HostDB:ENSG00000175213"/>
<dbReference type="eggNOG" id="KOG1721">
    <property type="taxonomic scope" value="Eukaryota"/>
</dbReference>
<dbReference type="GeneTree" id="ENSGT00930000151062"/>
<dbReference type="HOGENOM" id="CLU_002678_51_0_1"/>
<dbReference type="InParanoid" id="Q9H9D4"/>
<dbReference type="OMA" id="GWISLVQ"/>
<dbReference type="OrthoDB" id="8117402at2759"/>
<dbReference type="PAN-GO" id="Q9H9D4">
    <property type="GO annotations" value="3 GO annotations based on evolutionary models"/>
</dbReference>
<dbReference type="PhylomeDB" id="Q9H9D4"/>
<dbReference type="TreeFam" id="TF331495"/>
<dbReference type="PathwayCommons" id="Q9H9D4"/>
<dbReference type="SignaLink" id="Q9H9D4"/>
<dbReference type="BioGRID-ORCS" id="79797">
    <property type="hits" value="25 hits in 1176 CRISPR screens"/>
</dbReference>
<dbReference type="ChiTaRS" id="ZNF408">
    <property type="organism name" value="human"/>
</dbReference>
<dbReference type="GenomeRNAi" id="79797"/>
<dbReference type="Pharos" id="Q9H9D4">
    <property type="development level" value="Tbio"/>
</dbReference>
<dbReference type="PRO" id="PR:Q9H9D4"/>
<dbReference type="Proteomes" id="UP000005640">
    <property type="component" value="Chromosome 11"/>
</dbReference>
<dbReference type="RNAct" id="Q9H9D4">
    <property type="molecule type" value="protein"/>
</dbReference>
<dbReference type="Bgee" id="ENSG00000175213">
    <property type="expression patterns" value="Expressed in endothelial cell and 160 other cell types or tissues"/>
</dbReference>
<dbReference type="GO" id="GO:0005634">
    <property type="term" value="C:nucleus"/>
    <property type="evidence" value="ECO:0000314"/>
    <property type="project" value="UniProtKB"/>
</dbReference>
<dbReference type="GO" id="GO:0000981">
    <property type="term" value="F:DNA-binding transcription factor activity, RNA polymerase II-specific"/>
    <property type="evidence" value="ECO:0000318"/>
    <property type="project" value="GO_Central"/>
</dbReference>
<dbReference type="GO" id="GO:0042802">
    <property type="term" value="F:identical protein binding"/>
    <property type="evidence" value="ECO:0000353"/>
    <property type="project" value="IntAct"/>
</dbReference>
<dbReference type="GO" id="GO:0000978">
    <property type="term" value="F:RNA polymerase II cis-regulatory region sequence-specific DNA binding"/>
    <property type="evidence" value="ECO:0000318"/>
    <property type="project" value="GO_Central"/>
</dbReference>
<dbReference type="GO" id="GO:0008270">
    <property type="term" value="F:zinc ion binding"/>
    <property type="evidence" value="ECO:0007669"/>
    <property type="project" value="UniProtKB-KW"/>
</dbReference>
<dbReference type="GO" id="GO:0006357">
    <property type="term" value="P:regulation of transcription by RNA polymerase II"/>
    <property type="evidence" value="ECO:0000318"/>
    <property type="project" value="GO_Central"/>
</dbReference>
<dbReference type="CDD" id="cd10520">
    <property type="entry name" value="PR-SET_PRDM17"/>
    <property type="match status" value="1"/>
</dbReference>
<dbReference type="FunFam" id="3.30.160.60:FF:000100">
    <property type="entry name" value="Zinc finger 45-like"/>
    <property type="match status" value="1"/>
</dbReference>
<dbReference type="FunFam" id="2.170.270.10:FF:000044">
    <property type="entry name" value="Zinc finger protein 408"/>
    <property type="match status" value="1"/>
</dbReference>
<dbReference type="FunFam" id="3.30.160.60:FF:000849">
    <property type="entry name" value="Zinc finger protein 408"/>
    <property type="match status" value="2"/>
</dbReference>
<dbReference type="FunFam" id="3.30.160.60:FF:001101">
    <property type="entry name" value="Zinc finger protein 408"/>
    <property type="match status" value="1"/>
</dbReference>
<dbReference type="FunFam" id="3.30.160.60:FF:001136">
    <property type="entry name" value="Zinc finger protein 408"/>
    <property type="match status" value="1"/>
</dbReference>
<dbReference type="FunFam" id="3.30.160.60:FF:001253">
    <property type="entry name" value="Zinc finger protein 408"/>
    <property type="match status" value="1"/>
</dbReference>
<dbReference type="FunFam" id="3.30.160.60:FF:001308">
    <property type="entry name" value="Zinc finger protein 408"/>
    <property type="match status" value="1"/>
</dbReference>
<dbReference type="FunFam" id="3.30.160.60:FF:001723">
    <property type="entry name" value="Zinc finger protein 408"/>
    <property type="match status" value="1"/>
</dbReference>
<dbReference type="FunFam" id="3.30.160.60:FF:001515">
    <property type="entry name" value="zinc finger protein 408"/>
    <property type="match status" value="1"/>
</dbReference>
<dbReference type="FunFam" id="3.30.160.60:FF:001616">
    <property type="entry name" value="zinc finger protein 408 isoform X2"/>
    <property type="match status" value="1"/>
</dbReference>
<dbReference type="Gene3D" id="3.30.160.60">
    <property type="entry name" value="Classic Zinc Finger"/>
    <property type="match status" value="10"/>
</dbReference>
<dbReference type="Gene3D" id="2.170.270.10">
    <property type="entry name" value="SET domain"/>
    <property type="match status" value="1"/>
</dbReference>
<dbReference type="InterPro" id="IPR044412">
    <property type="entry name" value="PRDM17_PR-SET"/>
</dbReference>
<dbReference type="InterPro" id="IPR001214">
    <property type="entry name" value="SET_dom"/>
</dbReference>
<dbReference type="InterPro" id="IPR046341">
    <property type="entry name" value="SET_dom_sf"/>
</dbReference>
<dbReference type="InterPro" id="IPR050331">
    <property type="entry name" value="Zinc_finger"/>
</dbReference>
<dbReference type="InterPro" id="IPR036236">
    <property type="entry name" value="Znf_C2H2_sf"/>
</dbReference>
<dbReference type="InterPro" id="IPR013087">
    <property type="entry name" value="Znf_C2H2_type"/>
</dbReference>
<dbReference type="PANTHER" id="PTHR16515:SF66">
    <property type="entry name" value="C2H2-TYPE DOMAIN-CONTAINING PROTEIN"/>
    <property type="match status" value="1"/>
</dbReference>
<dbReference type="PANTHER" id="PTHR16515">
    <property type="entry name" value="PR DOMAIN ZINC FINGER PROTEIN"/>
    <property type="match status" value="1"/>
</dbReference>
<dbReference type="Pfam" id="PF21549">
    <property type="entry name" value="PRDM2_PR"/>
    <property type="match status" value="1"/>
</dbReference>
<dbReference type="Pfam" id="PF00096">
    <property type="entry name" value="zf-C2H2"/>
    <property type="match status" value="8"/>
</dbReference>
<dbReference type="SMART" id="SM00355">
    <property type="entry name" value="ZnF_C2H2"/>
    <property type="match status" value="10"/>
</dbReference>
<dbReference type="SUPFAM" id="SSF57667">
    <property type="entry name" value="beta-beta-alpha zinc fingers"/>
    <property type="match status" value="5"/>
</dbReference>
<dbReference type="PROSITE" id="PS00028">
    <property type="entry name" value="ZINC_FINGER_C2H2_1"/>
    <property type="match status" value="10"/>
</dbReference>
<dbReference type="PROSITE" id="PS50157">
    <property type="entry name" value="ZINC_FINGER_C2H2_2"/>
    <property type="match status" value="10"/>
</dbReference>